<feature type="signal peptide" evidence="2">
    <location>
        <begin position="1"/>
        <end position="21"/>
    </location>
</feature>
<feature type="chain" id="PRO_5003466490" description="FAD-linked oxidoreductase OXR1" evidence="2">
    <location>
        <begin position="22"/>
        <end position="507"/>
    </location>
</feature>
<feature type="domain" description="FAD-binding PCMH-type" evidence="4">
    <location>
        <begin position="73"/>
        <end position="245"/>
    </location>
</feature>
<feature type="glycosylation site" description="N-linked (GlcNAc...) asparagine" evidence="3">
    <location>
        <position position="34"/>
    </location>
</feature>
<feature type="glycosylation site" description="N-linked (GlcNAc...) asparagine" evidence="3">
    <location>
        <position position="65"/>
    </location>
</feature>
<feature type="glycosylation site" description="N-linked (GlcNAc...) asparagine" evidence="3">
    <location>
        <position position="263"/>
    </location>
</feature>
<feature type="glycosylation site" description="N-linked (GlcNAc...) asparagine" evidence="3">
    <location>
        <position position="288"/>
    </location>
</feature>
<gene>
    <name evidence="6" type="primary">OXR1</name>
    <name type="ORF">MGG_10961</name>
</gene>
<name>OXR1_PYRO7</name>
<evidence type="ECO:0000250" key="1">
    <source>
        <dbReference type="UniProtKB" id="Q5BEJ5"/>
    </source>
</evidence>
<evidence type="ECO:0000255" key="2"/>
<evidence type="ECO:0000255" key="3">
    <source>
        <dbReference type="PROSITE-ProRule" id="PRU00498"/>
    </source>
</evidence>
<evidence type="ECO:0000255" key="4">
    <source>
        <dbReference type="PROSITE-ProRule" id="PRU00718"/>
    </source>
</evidence>
<evidence type="ECO:0000269" key="5">
    <source>
    </source>
</evidence>
<evidence type="ECO:0000303" key="6">
    <source>
    </source>
</evidence>
<evidence type="ECO:0000305" key="7"/>
<evidence type="ECO:0000305" key="8">
    <source>
    </source>
</evidence>
<sequence length="507" mass="54993">MTIKFASLILAGLGLGSGALGSVTFRREESSWTNDSLTSVFAQQAKGLFLPRTVISFQGQEWFENVTERWDIYAPPTFKVSVSPSTEKDVESAVKLAAKFKIPFLATGGRHGYGTTLGKLKNGLSIDLSLLNQFSIDSKAATITVGPGVRFRDIFTPLYEAGFQVPTGTCSCVGMIGATLGGGIGRLNGLDGLMIDALESARVVTADGRTLTVSEKENKDLFWGMRGAGQNFGVVVSATYKLKPLYAAGVWTNVDLIFSPDKNATYFDVVTSMEVPPQLTIASVVTYNATLDEPQLIATLTWTGPRDEALAAMKPILDVGPRHSEVTEATYATLPRVATFGTTDAVCAPGQIYDIYGVGLRRLDSAAWRSTFSKMARFYAAEPAGRASSILYETWPVQATVAVPDDATAYPWRDASTYVLIQMRWDRPGSPLERAADRLGAELRSDLSATGGYQGAGPAVYVNYAHGDERLEDIYGARKLPRLAKLKKQYDPGNVFRFHHALPTKYP</sequence>
<reference key="1">
    <citation type="journal article" date="2005" name="Nature">
        <title>The genome sequence of the rice blast fungus Magnaporthe grisea.</title>
        <authorList>
            <person name="Dean R.A."/>
            <person name="Talbot N.J."/>
            <person name="Ebbole D.J."/>
            <person name="Farman M.L."/>
            <person name="Mitchell T.K."/>
            <person name="Orbach M.J."/>
            <person name="Thon M.R."/>
            <person name="Kulkarni R."/>
            <person name="Xu J.-R."/>
            <person name="Pan H."/>
            <person name="Read N.D."/>
            <person name="Lee Y.-H."/>
            <person name="Carbone I."/>
            <person name="Brown D."/>
            <person name="Oh Y.Y."/>
            <person name="Donofrio N."/>
            <person name="Jeong J.S."/>
            <person name="Soanes D.M."/>
            <person name="Djonovic S."/>
            <person name="Kolomiets E."/>
            <person name="Rehmeyer C."/>
            <person name="Li W."/>
            <person name="Harding M."/>
            <person name="Kim S."/>
            <person name="Lebrun M.-H."/>
            <person name="Bohnert H."/>
            <person name="Coughlan S."/>
            <person name="Butler J."/>
            <person name="Calvo S.E."/>
            <person name="Ma L.-J."/>
            <person name="Nicol R."/>
            <person name="Purcell S."/>
            <person name="Nusbaum C."/>
            <person name="Galagan J.E."/>
            <person name="Birren B.W."/>
        </authorList>
    </citation>
    <scope>NUCLEOTIDE SEQUENCE [LARGE SCALE GENOMIC DNA]</scope>
    <source>
        <strain>70-15 / ATCC MYA-4617 / FGSC 8958</strain>
    </source>
</reference>
<reference key="2">
    <citation type="journal article" date="2017" name="Microbiology">
        <title>Unravelling the biosynthesis of pyriculol in the rice blast fungus Magnaporthe oryzae.</title>
        <authorList>
            <person name="Jacob S."/>
            <person name="Groetsch T."/>
            <person name="Foster A.J."/>
            <person name="Schueffler A."/>
            <person name="Rieger P.H."/>
            <person name="Sandjo L.P."/>
            <person name="Liermann J.C."/>
            <person name="Opatz T."/>
            <person name="Thines E."/>
        </authorList>
    </citation>
    <scope>IDENTIFICATION</scope>
    <scope>INDUCTION</scope>
    <scope>FUNCTION</scope>
    <scope>DISRUPTION PHENOTYPE</scope>
    <scope>CATALYTIC ACTIVITY</scope>
    <scope>PATHWAY</scope>
</reference>
<keyword id="KW-0274">FAD</keyword>
<keyword id="KW-0285">Flavoprotein</keyword>
<keyword id="KW-0325">Glycoprotein</keyword>
<keyword id="KW-0560">Oxidoreductase</keyword>
<keyword id="KW-1185">Reference proteome</keyword>
<keyword id="KW-0732">Signal</keyword>
<organism>
    <name type="scientific">Pyricularia oryzae (strain 70-15 / ATCC MYA-4617 / FGSC 8958)</name>
    <name type="common">Rice blast fungus</name>
    <name type="synonym">Magnaporthe oryzae</name>
    <dbReference type="NCBI Taxonomy" id="242507"/>
    <lineage>
        <taxon>Eukaryota</taxon>
        <taxon>Fungi</taxon>
        <taxon>Dikarya</taxon>
        <taxon>Ascomycota</taxon>
        <taxon>Pezizomycotina</taxon>
        <taxon>Sordariomycetes</taxon>
        <taxon>Sordariomycetidae</taxon>
        <taxon>Magnaporthales</taxon>
        <taxon>Pyriculariaceae</taxon>
        <taxon>Pyricularia</taxon>
    </lineage>
</organism>
<dbReference type="EC" id="1.-.-.-" evidence="5"/>
<dbReference type="EMBL" id="CM001233">
    <property type="protein sequence ID" value="EHA52497.1"/>
    <property type="molecule type" value="Genomic_DNA"/>
</dbReference>
<dbReference type="RefSeq" id="XP_003712304.1">
    <property type="nucleotide sequence ID" value="XM_003712256.1"/>
</dbReference>
<dbReference type="SMR" id="G4N285"/>
<dbReference type="STRING" id="242507.G4N285"/>
<dbReference type="GlyCosmos" id="G4N285">
    <property type="glycosylation" value="4 sites, No reported glycans"/>
</dbReference>
<dbReference type="EnsemblFungi" id="MGG_10961T0">
    <property type="protein sequence ID" value="MGG_10961T0"/>
    <property type="gene ID" value="MGG_10961"/>
</dbReference>
<dbReference type="GeneID" id="2677715"/>
<dbReference type="KEGG" id="mgr:MGG_10961"/>
<dbReference type="VEuPathDB" id="FungiDB:MGG_10961"/>
<dbReference type="eggNOG" id="ENOG502SJ3M">
    <property type="taxonomic scope" value="Eukaryota"/>
</dbReference>
<dbReference type="HOGENOM" id="CLU_018354_0_0_1"/>
<dbReference type="InParanoid" id="G4N285"/>
<dbReference type="OMA" id="MAKQHNI"/>
<dbReference type="OrthoDB" id="415825at2759"/>
<dbReference type="Proteomes" id="UP000009058">
    <property type="component" value="Chromosome 3"/>
</dbReference>
<dbReference type="GO" id="GO:0071949">
    <property type="term" value="F:FAD binding"/>
    <property type="evidence" value="ECO:0007669"/>
    <property type="project" value="InterPro"/>
</dbReference>
<dbReference type="GO" id="GO:0016491">
    <property type="term" value="F:oxidoreductase activity"/>
    <property type="evidence" value="ECO:0007669"/>
    <property type="project" value="UniProtKB-KW"/>
</dbReference>
<dbReference type="Gene3D" id="3.30.465.10">
    <property type="match status" value="1"/>
</dbReference>
<dbReference type="Gene3D" id="3.40.462.20">
    <property type="match status" value="1"/>
</dbReference>
<dbReference type="InterPro" id="IPR012951">
    <property type="entry name" value="BBE"/>
</dbReference>
<dbReference type="InterPro" id="IPR016166">
    <property type="entry name" value="FAD-bd_PCMH"/>
</dbReference>
<dbReference type="InterPro" id="IPR036318">
    <property type="entry name" value="FAD-bd_PCMH-like_sf"/>
</dbReference>
<dbReference type="InterPro" id="IPR016169">
    <property type="entry name" value="FAD-bd_PCMH_sub2"/>
</dbReference>
<dbReference type="InterPro" id="IPR050416">
    <property type="entry name" value="FAD-linked_Oxidoreductase"/>
</dbReference>
<dbReference type="InterPro" id="IPR006094">
    <property type="entry name" value="Oxid_FAD_bind_N"/>
</dbReference>
<dbReference type="PANTHER" id="PTHR42973">
    <property type="entry name" value="BINDING OXIDOREDUCTASE, PUTATIVE (AFU_ORTHOLOGUE AFUA_1G17690)-RELATED"/>
    <property type="match status" value="1"/>
</dbReference>
<dbReference type="PANTHER" id="PTHR42973:SF9">
    <property type="entry name" value="FAD-BINDING PCMH-TYPE DOMAIN-CONTAINING PROTEIN-RELATED"/>
    <property type="match status" value="1"/>
</dbReference>
<dbReference type="Pfam" id="PF08031">
    <property type="entry name" value="BBE"/>
    <property type="match status" value="1"/>
</dbReference>
<dbReference type="Pfam" id="PF01565">
    <property type="entry name" value="FAD_binding_4"/>
    <property type="match status" value="1"/>
</dbReference>
<dbReference type="SUPFAM" id="SSF56176">
    <property type="entry name" value="FAD-binding/transporter-associated domain-like"/>
    <property type="match status" value="1"/>
</dbReference>
<dbReference type="PROSITE" id="PS51387">
    <property type="entry name" value="FAD_PCMH"/>
    <property type="match status" value="1"/>
</dbReference>
<proteinExistence type="evidence at protein level"/>
<protein>
    <recommendedName>
        <fullName evidence="6">FAD-linked oxidoreductase OXR1</fullName>
        <ecNumber evidence="5">1.-.-.-</ecNumber>
    </recommendedName>
    <alternativeName>
        <fullName evidence="6">Pyriculol/pyriculariol biosynthesis cluster protein OXR1</fullName>
    </alternativeName>
</protein>
<accession>G4N285</accession>
<comment type="function">
    <text evidence="5 8">FAD-linked oxidoreductase; part of the gene cluster that mediates the biosynthesis of pyriculol and pyriculariol, two heptaketides that induce lesion formation upon application on rice leaves but are dispensable for pathogenicity (PubMed:27902426). The highly reducing polyketide synthase synthesizes the heptaketide backbone of pyriculol and pyriculariol (PubMed:27902426). Pyriculol and pyriculariol contain several hydroxyl moieties and double bonds, so it can be assumed that several reduction steps occur during biosynthesis. These reactions could be executed by PKS19 itself or partly by the tailoring enzymes OXR1, OXR2, RED1, RED2 or RED3, identified within the cluster (Probable). The FAD-linked oxidoreductase OXR1 is the only tailoring enzyme for which the function has been determined yet, and is involved in the oxidation of dihydropyriculol and dihydropyriculariol into pyriculol and pyriculariol, respectively (PubMed:27902426).</text>
</comment>
<comment type="catalytic activity">
    <reaction evidence="5">
        <text>dihydropyriculol + A = pyriculol + AH2</text>
        <dbReference type="Rhea" id="RHEA:63972"/>
        <dbReference type="ChEBI" id="CHEBI:13193"/>
        <dbReference type="ChEBI" id="CHEBI:17499"/>
        <dbReference type="ChEBI" id="CHEBI:80728"/>
        <dbReference type="ChEBI" id="CHEBI:142635"/>
    </reaction>
    <physiologicalReaction direction="left-to-right" evidence="5">
        <dbReference type="Rhea" id="RHEA:63973"/>
    </physiologicalReaction>
</comment>
<comment type="catalytic activity">
    <reaction evidence="5">
        <text>dihydropyriculariol + A = pyriculariol + AH2</text>
        <dbReference type="Rhea" id="RHEA:63976"/>
        <dbReference type="ChEBI" id="CHEBI:13193"/>
        <dbReference type="ChEBI" id="CHEBI:17499"/>
        <dbReference type="ChEBI" id="CHEBI:142636"/>
        <dbReference type="ChEBI" id="CHEBI:142637"/>
    </reaction>
    <physiologicalReaction direction="left-to-right" evidence="5">
        <dbReference type="Rhea" id="RHEA:63977"/>
    </physiologicalReaction>
</comment>
<comment type="cofactor">
    <cofactor evidence="1">
        <name>FAD</name>
        <dbReference type="ChEBI" id="CHEBI:57692"/>
    </cofactor>
</comment>
<comment type="pathway">
    <text evidence="5">Polyketide biosynthesis.</text>
</comment>
<comment type="induction">
    <text evidence="5">Expression is increased in rice-extract medium (REM) and is correlated with the production of pyriculol.</text>
</comment>
<comment type="disruption phenotype">
    <text evidence="5">Impairs the production of pyriculol and pyriculariol, but accumulates their reduced forms dihydropyriculol and dihydropyriculariol.</text>
</comment>
<comment type="similarity">
    <text evidence="7">Belongs to the oxygen-dependent FAD-linked oxidoreductase family.</text>
</comment>